<name>RUSD1_HUMAN</name>
<sequence>MEPGSVENLSIVYRSRDFLVVNKHWDVRIDSKAWRETLTLQKQLRYRFPELADPDTCYGFRFCHQLDFSTSGALCVALNKAAAGSAYRCFKERRVTKAYLALLRGHIQESRVTISHAIGRNSTEGRAHTMCIEGSQGCENPKPSLTDLVVLEHGLYAGDPVSKVLLKPLTGRTHQLRVHCSALGHPVVGDLTYGEVSGREDRPFRMMLHAFYLRIPTDTECVEVCTPDPFLPSLDACWSPHTLLQSLDQLVQALRATPDPDPEDRGPRPGSPSALLPGPGRPPPPPTKPPETEAQRGPCLQWLSEWTLEPDS</sequence>
<protein>
    <recommendedName>
        <fullName>RNA pseudouridylate synthase domain-containing protein 1</fullName>
    </recommendedName>
    <alternativeName>
        <fullName>Ribosomal large subunit pseudouridine synthase C-like protein</fullName>
    </alternativeName>
</protein>
<evidence type="ECO:0000250" key="1"/>
<evidence type="ECO:0000256" key="2">
    <source>
        <dbReference type="SAM" id="MobiDB-lite"/>
    </source>
</evidence>
<evidence type="ECO:0000305" key="3"/>
<evidence type="ECO:0007744" key="4">
    <source>
    </source>
</evidence>
<evidence type="ECO:0007829" key="5">
    <source>
        <dbReference type="PDB" id="5VBB"/>
    </source>
</evidence>
<accession>Q9UJJ7</accession>
<accession>D3DU66</accession>
<reference key="1">
    <citation type="journal article" date="2001" name="Hum. Mol. Genet.">
        <title>Sequence, structure and pathology of the fully annotated terminal 2 Mb of the short arm of human chromosome 16.</title>
        <authorList>
            <person name="Daniels R.J."/>
            <person name="Peden J.F."/>
            <person name="Lloyd C."/>
            <person name="Horsley S.W."/>
            <person name="Clark K."/>
            <person name="Tufarelli C."/>
            <person name="Kearney L."/>
            <person name="Buckle V.J."/>
            <person name="Doggett N.A."/>
            <person name="Flint J."/>
            <person name="Higgs D.R."/>
        </authorList>
    </citation>
    <scope>NUCLEOTIDE SEQUENCE [LARGE SCALE GENOMIC DNA]</scope>
</reference>
<reference key="2">
    <citation type="journal article" date="2004" name="Nature">
        <title>The sequence and analysis of duplication-rich human chromosome 16.</title>
        <authorList>
            <person name="Martin J."/>
            <person name="Han C."/>
            <person name="Gordon L.A."/>
            <person name="Terry A."/>
            <person name="Prabhakar S."/>
            <person name="She X."/>
            <person name="Xie G."/>
            <person name="Hellsten U."/>
            <person name="Chan Y.M."/>
            <person name="Altherr M."/>
            <person name="Couronne O."/>
            <person name="Aerts A."/>
            <person name="Bajorek E."/>
            <person name="Black S."/>
            <person name="Blumer H."/>
            <person name="Branscomb E."/>
            <person name="Brown N.C."/>
            <person name="Bruno W.J."/>
            <person name="Buckingham J.M."/>
            <person name="Callen D.F."/>
            <person name="Campbell C.S."/>
            <person name="Campbell M.L."/>
            <person name="Campbell E.W."/>
            <person name="Caoile C."/>
            <person name="Challacombe J.F."/>
            <person name="Chasteen L.A."/>
            <person name="Chertkov O."/>
            <person name="Chi H.C."/>
            <person name="Christensen M."/>
            <person name="Clark L.M."/>
            <person name="Cohn J.D."/>
            <person name="Denys M."/>
            <person name="Detter J.C."/>
            <person name="Dickson M."/>
            <person name="Dimitrijevic-Bussod M."/>
            <person name="Escobar J."/>
            <person name="Fawcett J.J."/>
            <person name="Flowers D."/>
            <person name="Fotopulos D."/>
            <person name="Glavina T."/>
            <person name="Gomez M."/>
            <person name="Gonzales E."/>
            <person name="Goodstein D."/>
            <person name="Goodwin L.A."/>
            <person name="Grady D.L."/>
            <person name="Grigoriev I."/>
            <person name="Groza M."/>
            <person name="Hammon N."/>
            <person name="Hawkins T."/>
            <person name="Haydu L."/>
            <person name="Hildebrand C.E."/>
            <person name="Huang W."/>
            <person name="Israni S."/>
            <person name="Jett J."/>
            <person name="Jewett P.B."/>
            <person name="Kadner K."/>
            <person name="Kimball H."/>
            <person name="Kobayashi A."/>
            <person name="Krawczyk M.-C."/>
            <person name="Leyba T."/>
            <person name="Longmire J.L."/>
            <person name="Lopez F."/>
            <person name="Lou Y."/>
            <person name="Lowry S."/>
            <person name="Ludeman T."/>
            <person name="Manohar C.F."/>
            <person name="Mark G.A."/>
            <person name="McMurray K.L."/>
            <person name="Meincke L.J."/>
            <person name="Morgan J."/>
            <person name="Moyzis R.K."/>
            <person name="Mundt M.O."/>
            <person name="Munk A.C."/>
            <person name="Nandkeshwar R.D."/>
            <person name="Pitluck S."/>
            <person name="Pollard M."/>
            <person name="Predki P."/>
            <person name="Parson-Quintana B."/>
            <person name="Ramirez L."/>
            <person name="Rash S."/>
            <person name="Retterer J."/>
            <person name="Ricke D.O."/>
            <person name="Robinson D.L."/>
            <person name="Rodriguez A."/>
            <person name="Salamov A."/>
            <person name="Saunders E.H."/>
            <person name="Scott D."/>
            <person name="Shough T."/>
            <person name="Stallings R.L."/>
            <person name="Stalvey M."/>
            <person name="Sutherland R.D."/>
            <person name="Tapia R."/>
            <person name="Tesmer J.G."/>
            <person name="Thayer N."/>
            <person name="Thompson L.S."/>
            <person name="Tice H."/>
            <person name="Torney D.C."/>
            <person name="Tran-Gyamfi M."/>
            <person name="Tsai M."/>
            <person name="Ulanovsky L.E."/>
            <person name="Ustaszewska A."/>
            <person name="Vo N."/>
            <person name="White P.S."/>
            <person name="Williams A.L."/>
            <person name="Wills P.L."/>
            <person name="Wu J.-R."/>
            <person name="Wu K."/>
            <person name="Yang J."/>
            <person name="DeJong P."/>
            <person name="Bruce D."/>
            <person name="Doggett N.A."/>
            <person name="Deaven L."/>
            <person name="Schmutz J."/>
            <person name="Grimwood J."/>
            <person name="Richardson P."/>
            <person name="Rokhsar D.S."/>
            <person name="Eichler E.E."/>
            <person name="Gilna P."/>
            <person name="Lucas S.M."/>
            <person name="Myers R.M."/>
            <person name="Rubin E.M."/>
            <person name="Pennacchio L.A."/>
        </authorList>
    </citation>
    <scope>NUCLEOTIDE SEQUENCE [LARGE SCALE GENOMIC DNA]</scope>
</reference>
<reference key="3">
    <citation type="submission" date="2005-09" db="EMBL/GenBank/DDBJ databases">
        <authorList>
            <person name="Mural R.J."/>
            <person name="Istrail S."/>
            <person name="Sutton G.G."/>
            <person name="Florea L."/>
            <person name="Halpern A.L."/>
            <person name="Mobarry C.M."/>
            <person name="Lippert R."/>
            <person name="Walenz B."/>
            <person name="Shatkay H."/>
            <person name="Dew I."/>
            <person name="Miller J.R."/>
            <person name="Flanigan M.J."/>
            <person name="Edwards N.J."/>
            <person name="Bolanos R."/>
            <person name="Fasulo D."/>
            <person name="Halldorsson B.V."/>
            <person name="Hannenhalli S."/>
            <person name="Turner R."/>
            <person name="Yooseph S."/>
            <person name="Lu F."/>
            <person name="Nusskern D.R."/>
            <person name="Shue B.C."/>
            <person name="Zheng X.H."/>
            <person name="Zhong F."/>
            <person name="Delcher A.L."/>
            <person name="Huson D.H."/>
            <person name="Kravitz S.A."/>
            <person name="Mouchard L."/>
            <person name="Reinert K."/>
            <person name="Remington K.A."/>
            <person name="Clark A.G."/>
            <person name="Waterman M.S."/>
            <person name="Eichler E.E."/>
            <person name="Adams M.D."/>
            <person name="Hunkapiller M.W."/>
            <person name="Myers E.W."/>
            <person name="Venter J.C."/>
        </authorList>
    </citation>
    <scope>NUCLEOTIDE SEQUENCE [LARGE SCALE GENOMIC DNA]</scope>
</reference>
<reference key="4">
    <citation type="journal article" date="2004" name="Genome Res.">
        <title>The status, quality, and expansion of the NIH full-length cDNA project: the Mammalian Gene Collection (MGC).</title>
        <authorList>
            <consortium name="The MGC Project Team"/>
        </authorList>
    </citation>
    <scope>NUCLEOTIDE SEQUENCE [LARGE SCALE MRNA]</scope>
    <source>
        <tissue>Lung</tissue>
    </source>
</reference>
<reference key="5">
    <citation type="journal article" date="2012" name="Proc. Natl. Acad. Sci. U.S.A.">
        <title>N-terminal acetylome analyses and functional insights of the N-terminal acetyltransferase NatB.</title>
        <authorList>
            <person name="Van Damme P."/>
            <person name="Lasa M."/>
            <person name="Polevoda B."/>
            <person name="Gazquez C."/>
            <person name="Elosegui-Artola A."/>
            <person name="Kim D.S."/>
            <person name="De Juan-Pardo E."/>
            <person name="Demeyer K."/>
            <person name="Hole K."/>
            <person name="Larrea E."/>
            <person name="Timmerman E."/>
            <person name="Prieto J."/>
            <person name="Arnesen T."/>
            <person name="Sherman F."/>
            <person name="Gevaert K."/>
            <person name="Aldabe R."/>
        </authorList>
    </citation>
    <scope>ACETYLATION [LARGE SCALE ANALYSIS] AT MET-1</scope>
    <scope>IDENTIFICATION BY MASS SPECTROMETRY [LARGE SCALE ANALYSIS]</scope>
</reference>
<feature type="chain" id="PRO_0000300816" description="RNA pseudouridylate synthase domain-containing protein 1">
    <location>
        <begin position="1"/>
        <end position="312"/>
    </location>
</feature>
<feature type="region of interest" description="Disordered" evidence="2">
    <location>
        <begin position="256"/>
        <end position="298"/>
    </location>
</feature>
<feature type="compositionally biased region" description="Pro residues" evidence="2">
    <location>
        <begin position="279"/>
        <end position="289"/>
    </location>
</feature>
<feature type="active site" evidence="1">
    <location>
        <position position="67"/>
    </location>
</feature>
<feature type="modified residue" description="N-acetylmethionine" evidence="4">
    <location>
        <position position="1"/>
    </location>
</feature>
<feature type="sequence variant" id="VAR_034883" description="In dbSNP:rs2272898.">
    <original>E</original>
    <variation>Q</variation>
    <location>
        <position position="124"/>
    </location>
</feature>
<feature type="sequence variant" id="VAR_034884" description="In dbSNP:rs3751672.">
    <original>L</original>
    <variation>P</variation>
    <location>
        <position position="247"/>
    </location>
</feature>
<feature type="strand" evidence="5">
    <location>
        <begin position="10"/>
        <end position="14"/>
    </location>
</feature>
<feature type="strand" evidence="5">
    <location>
        <begin position="16"/>
        <end position="23"/>
    </location>
</feature>
<feature type="helix" evidence="5">
    <location>
        <begin position="40"/>
        <end position="47"/>
    </location>
</feature>
<feature type="strand" evidence="5">
    <location>
        <begin position="61"/>
        <end position="64"/>
    </location>
</feature>
<feature type="strand" evidence="5">
    <location>
        <begin position="71"/>
        <end position="79"/>
    </location>
</feature>
<feature type="helix" evidence="5">
    <location>
        <begin position="80"/>
        <end position="91"/>
    </location>
</feature>
<feature type="strand" evidence="5">
    <location>
        <begin position="96"/>
        <end position="105"/>
    </location>
</feature>
<feature type="strand" evidence="5">
    <location>
        <begin position="109"/>
        <end position="114"/>
    </location>
</feature>
<feature type="strand" evidence="5">
    <location>
        <begin position="118"/>
        <end position="124"/>
    </location>
</feature>
<feature type="turn" evidence="5">
    <location>
        <begin position="125"/>
        <end position="127"/>
    </location>
</feature>
<feature type="strand" evidence="5">
    <location>
        <begin position="130"/>
        <end position="132"/>
    </location>
</feature>
<feature type="strand" evidence="5">
    <location>
        <begin position="138"/>
        <end position="142"/>
    </location>
</feature>
<feature type="strand" evidence="5">
    <location>
        <begin position="146"/>
        <end position="156"/>
    </location>
</feature>
<feature type="strand" evidence="5">
    <location>
        <begin position="159"/>
        <end position="170"/>
    </location>
</feature>
<feature type="helix" evidence="5">
    <location>
        <begin position="175"/>
        <end position="182"/>
    </location>
</feature>
<feature type="turn" evidence="5">
    <location>
        <begin position="191"/>
        <end position="193"/>
    </location>
</feature>
<feature type="strand" evidence="5">
    <location>
        <begin position="202"/>
        <end position="205"/>
    </location>
</feature>
<feature type="strand" evidence="5">
    <location>
        <begin position="208"/>
        <end position="216"/>
    </location>
</feature>
<feature type="strand" evidence="5">
    <location>
        <begin position="221"/>
        <end position="225"/>
    </location>
</feature>
<feature type="turn" evidence="5">
    <location>
        <begin position="232"/>
        <end position="234"/>
    </location>
</feature>
<feature type="strand" evidence="5">
    <location>
        <begin position="238"/>
        <end position="243"/>
    </location>
</feature>
<feature type="helix" evidence="5">
    <location>
        <begin position="247"/>
        <end position="256"/>
    </location>
</feature>
<comment type="interaction">
    <interactant intactId="EBI-3922794">
        <id>Q9UJJ7</id>
    </interactant>
    <interactant intactId="EBI-5235340">
        <id>Q7Z699</id>
        <label>SPRED1</label>
    </interactant>
    <organismsDiffer>false</organismsDiffer>
    <experiments>3</experiments>
</comment>
<comment type="similarity">
    <text evidence="3">Belongs to the pseudouridine synthase RluA family.</text>
</comment>
<gene>
    <name type="primary">RPUSD1</name>
    <name type="synonym">C16orf40</name>
    <name type="synonym">RLUCL</name>
</gene>
<proteinExistence type="evidence at protein level"/>
<keyword id="KW-0002">3D-structure</keyword>
<keyword id="KW-0007">Acetylation</keyword>
<keyword id="KW-1267">Proteomics identification</keyword>
<keyword id="KW-1185">Reference proteome</keyword>
<dbReference type="EMBL" id="AE006465">
    <property type="protein sequence ID" value="AAK61255.1"/>
    <property type="molecule type" value="Genomic_DNA"/>
</dbReference>
<dbReference type="EMBL" id="AL031033">
    <property type="status" value="NOT_ANNOTATED_CDS"/>
    <property type="molecule type" value="Genomic_DNA"/>
</dbReference>
<dbReference type="EMBL" id="CH471112">
    <property type="protein sequence ID" value="EAW85712.1"/>
    <property type="molecule type" value="Genomic_DNA"/>
</dbReference>
<dbReference type="EMBL" id="CH471112">
    <property type="protein sequence ID" value="EAW85713.1"/>
    <property type="molecule type" value="Genomic_DNA"/>
</dbReference>
<dbReference type="EMBL" id="CH471112">
    <property type="protein sequence ID" value="EAW85715.1"/>
    <property type="molecule type" value="Genomic_DNA"/>
</dbReference>
<dbReference type="EMBL" id="BC011783">
    <property type="protein sequence ID" value="AAH11783.1"/>
    <property type="molecule type" value="mRNA"/>
</dbReference>
<dbReference type="CCDS" id="CCDS10426.1"/>
<dbReference type="RefSeq" id="NP_478072.1">
    <property type="nucleotide sequence ID" value="NM_058192.3"/>
</dbReference>
<dbReference type="PDB" id="5VBB">
    <property type="method" value="X-ray"/>
    <property type="resolution" value="1.94 A"/>
    <property type="chains" value="A=1-261"/>
</dbReference>
<dbReference type="PDBsum" id="5VBB"/>
<dbReference type="SMR" id="Q9UJJ7"/>
<dbReference type="BioGRID" id="125221">
    <property type="interactions" value="99"/>
</dbReference>
<dbReference type="FunCoup" id="Q9UJJ7">
    <property type="interactions" value="33"/>
</dbReference>
<dbReference type="IntAct" id="Q9UJJ7">
    <property type="interactions" value="7"/>
</dbReference>
<dbReference type="STRING" id="9606.ENSP00000455026"/>
<dbReference type="iPTMnet" id="Q9UJJ7"/>
<dbReference type="PhosphoSitePlus" id="Q9UJJ7"/>
<dbReference type="BioMuta" id="RPUSD1"/>
<dbReference type="DMDM" id="74753357"/>
<dbReference type="jPOST" id="Q9UJJ7"/>
<dbReference type="MassIVE" id="Q9UJJ7"/>
<dbReference type="PaxDb" id="9606-ENSP00000455026"/>
<dbReference type="PeptideAtlas" id="Q9UJJ7"/>
<dbReference type="ProteomicsDB" id="84627"/>
<dbReference type="Pumba" id="Q9UJJ7"/>
<dbReference type="Antibodypedia" id="22914">
    <property type="antibodies" value="68 antibodies from 14 providers"/>
</dbReference>
<dbReference type="DNASU" id="113000"/>
<dbReference type="Ensembl" id="ENST00000007264.7">
    <property type="protein sequence ID" value="ENSP00000007264.2"/>
    <property type="gene ID" value="ENSG00000007376.8"/>
</dbReference>
<dbReference type="Ensembl" id="ENST00000561734.5">
    <property type="protein sequence ID" value="ENSP00000455026.1"/>
    <property type="gene ID" value="ENSG00000007376.8"/>
</dbReference>
<dbReference type="GeneID" id="113000"/>
<dbReference type="KEGG" id="hsa:113000"/>
<dbReference type="MANE-Select" id="ENST00000007264.7">
    <property type="protein sequence ID" value="ENSP00000007264.2"/>
    <property type="RefSeq nucleotide sequence ID" value="NM_058192.3"/>
    <property type="RefSeq protein sequence ID" value="NP_478072.1"/>
</dbReference>
<dbReference type="UCSC" id="uc002cka.4">
    <property type="organism name" value="human"/>
</dbReference>
<dbReference type="AGR" id="HGNC:14173"/>
<dbReference type="CTD" id="113000"/>
<dbReference type="DisGeNET" id="113000"/>
<dbReference type="GeneCards" id="RPUSD1"/>
<dbReference type="HGNC" id="HGNC:14173">
    <property type="gene designation" value="RPUSD1"/>
</dbReference>
<dbReference type="HPA" id="ENSG00000007376">
    <property type="expression patterns" value="Low tissue specificity"/>
</dbReference>
<dbReference type="neXtProt" id="NX_Q9UJJ7"/>
<dbReference type="OpenTargets" id="ENSG00000007376"/>
<dbReference type="PharmGKB" id="PA25556"/>
<dbReference type="VEuPathDB" id="HostDB:ENSG00000007376"/>
<dbReference type="eggNOG" id="KOG1919">
    <property type="taxonomic scope" value="Eukaryota"/>
</dbReference>
<dbReference type="GeneTree" id="ENSGT00510000048339"/>
<dbReference type="InParanoid" id="Q9UJJ7"/>
<dbReference type="OMA" id="DSPYRMM"/>
<dbReference type="OrthoDB" id="418349at2759"/>
<dbReference type="PAN-GO" id="Q9UJJ7">
    <property type="GO annotations" value="2 GO annotations based on evolutionary models"/>
</dbReference>
<dbReference type="PhylomeDB" id="Q9UJJ7"/>
<dbReference type="TreeFam" id="TF324755"/>
<dbReference type="PathwayCommons" id="Q9UJJ7"/>
<dbReference type="SignaLink" id="Q9UJJ7"/>
<dbReference type="BioGRID-ORCS" id="113000">
    <property type="hits" value="14 hits in 1152 CRISPR screens"/>
</dbReference>
<dbReference type="ChiTaRS" id="RPUSD1">
    <property type="organism name" value="human"/>
</dbReference>
<dbReference type="GenomeRNAi" id="113000"/>
<dbReference type="Pharos" id="Q9UJJ7">
    <property type="development level" value="Tdark"/>
</dbReference>
<dbReference type="PRO" id="PR:Q9UJJ7"/>
<dbReference type="Proteomes" id="UP000005640">
    <property type="component" value="Chromosome 16"/>
</dbReference>
<dbReference type="RNAct" id="Q9UJJ7">
    <property type="molecule type" value="protein"/>
</dbReference>
<dbReference type="Bgee" id="ENSG00000007376">
    <property type="expression patterns" value="Expressed in pancreatic ductal cell and 140 other cell types or tissues"/>
</dbReference>
<dbReference type="ExpressionAtlas" id="Q9UJJ7">
    <property type="expression patterns" value="baseline and differential"/>
</dbReference>
<dbReference type="GO" id="GO:0009982">
    <property type="term" value="F:pseudouridine synthase activity"/>
    <property type="evidence" value="ECO:0000318"/>
    <property type="project" value="GO_Central"/>
</dbReference>
<dbReference type="GO" id="GO:0003723">
    <property type="term" value="F:RNA binding"/>
    <property type="evidence" value="ECO:0007669"/>
    <property type="project" value="InterPro"/>
</dbReference>
<dbReference type="GO" id="GO:0000455">
    <property type="term" value="P:enzyme-directed rRNA pseudouridine synthesis"/>
    <property type="evidence" value="ECO:0000318"/>
    <property type="project" value="GO_Central"/>
</dbReference>
<dbReference type="CDD" id="cd02869">
    <property type="entry name" value="PseudoU_synth_RluA_like"/>
    <property type="match status" value="1"/>
</dbReference>
<dbReference type="Gene3D" id="3.30.2350.10">
    <property type="entry name" value="Pseudouridine synthase"/>
    <property type="match status" value="1"/>
</dbReference>
<dbReference type="InterPro" id="IPR020103">
    <property type="entry name" value="PsdUridine_synth_cat_dom_sf"/>
</dbReference>
<dbReference type="InterPro" id="IPR006145">
    <property type="entry name" value="PsdUridine_synth_RsuA/RluA"/>
</dbReference>
<dbReference type="InterPro" id="IPR050188">
    <property type="entry name" value="RluA_PseudoU_synthase"/>
</dbReference>
<dbReference type="PANTHER" id="PTHR21600">
    <property type="entry name" value="MITOCHONDRIAL RNA PSEUDOURIDINE SYNTHASE"/>
    <property type="match status" value="1"/>
</dbReference>
<dbReference type="PANTHER" id="PTHR21600:SF87">
    <property type="entry name" value="RNA PSEUDOURIDYLATE SYNTHASE DOMAIN-CONTAINING PROTEIN 1"/>
    <property type="match status" value="1"/>
</dbReference>
<dbReference type="Pfam" id="PF00849">
    <property type="entry name" value="PseudoU_synth_2"/>
    <property type="match status" value="1"/>
</dbReference>
<dbReference type="SUPFAM" id="SSF55120">
    <property type="entry name" value="Pseudouridine synthase"/>
    <property type="match status" value="1"/>
</dbReference>
<organism>
    <name type="scientific">Homo sapiens</name>
    <name type="common">Human</name>
    <dbReference type="NCBI Taxonomy" id="9606"/>
    <lineage>
        <taxon>Eukaryota</taxon>
        <taxon>Metazoa</taxon>
        <taxon>Chordata</taxon>
        <taxon>Craniata</taxon>
        <taxon>Vertebrata</taxon>
        <taxon>Euteleostomi</taxon>
        <taxon>Mammalia</taxon>
        <taxon>Eutheria</taxon>
        <taxon>Euarchontoglires</taxon>
        <taxon>Primates</taxon>
        <taxon>Haplorrhini</taxon>
        <taxon>Catarrhini</taxon>
        <taxon>Hominidae</taxon>
        <taxon>Homo</taxon>
    </lineage>
</organism>